<gene>
    <name type="primary">SIRPA</name>
    <name type="synonym">BIT</name>
    <name type="synonym">MFR</name>
    <name type="synonym">MYD1</name>
    <name type="synonym">PTPNS1</name>
    <name type="synonym">SHPS1</name>
    <name type="synonym">SIRP</name>
</gene>
<organism>
    <name type="scientific">Homo sapiens</name>
    <name type="common">Human</name>
    <dbReference type="NCBI Taxonomy" id="9606"/>
    <lineage>
        <taxon>Eukaryota</taxon>
        <taxon>Metazoa</taxon>
        <taxon>Chordata</taxon>
        <taxon>Craniata</taxon>
        <taxon>Vertebrata</taxon>
        <taxon>Euteleostomi</taxon>
        <taxon>Mammalia</taxon>
        <taxon>Eutheria</taxon>
        <taxon>Euarchontoglires</taxon>
        <taxon>Primates</taxon>
        <taxon>Haplorrhini</taxon>
        <taxon>Catarrhini</taxon>
        <taxon>Hominidae</taxon>
        <taxon>Homo</taxon>
    </lineage>
</organism>
<sequence length="504" mass="54967">MEPAGPAPGRLGPLLCLLLAASCAWSGVAGEEELQVIQPDKSVLVAAGETATLRCTATSLIPVGPIQWFRGAGPGRELIYNQKEGHFPRVTTVSDLTKRNNMDFSIRIGNITPADAGTYYCVKFRKGSPDDVEFKSGAGTELSVRAKPSAPVVSGPAARATPQHTVSFTCESHGFSPRDITLKWFKNGNELSDFQTNVDPVGESVSYSIHSTAKVVLTREDVHSQVICEVAHVTLQGDPLRGTANLSETIRVPPTLEVTQQPVRAENQVNVTCQVRKFYPQRLQLTWLENGNVSRTETASTVTENKDGTYNWMSWLLVNVSAHRDDVKLTCQVEHDGQPAVSKSHDLKVSAHPKEQGSNTAAENTGSNERNIYIVVGVVCTLLVALLMAALYLVRIRQKKAQGSTSSTRLHEPEKNAREITQDTNDITYADLNLPKGKKPAPQAAEPNNHTEYASIQTSPQPASEDTLTYADLDMVHLNRTPKQPAPKPEPSFSEYASVQVPRK</sequence>
<keyword id="KW-0002">3D-structure</keyword>
<keyword id="KW-0025">Alternative splicing</keyword>
<keyword id="KW-1015">Disulfide bond</keyword>
<keyword id="KW-0325">Glycoprotein</keyword>
<keyword id="KW-0393">Immunoglobulin domain</keyword>
<keyword id="KW-0472">Membrane</keyword>
<keyword id="KW-0597">Phosphoprotein</keyword>
<keyword id="KW-1267">Proteomics identification</keyword>
<keyword id="KW-1185">Reference proteome</keyword>
<keyword id="KW-0677">Repeat</keyword>
<keyword id="KW-0729">SH3-binding</keyword>
<keyword id="KW-0732">Signal</keyword>
<keyword id="KW-0812">Transmembrane</keyword>
<keyword id="KW-1133">Transmembrane helix</keyword>
<protein>
    <recommendedName>
        <fullName>Tyrosine-protein phosphatase non-receptor type substrate 1</fullName>
        <shortName>SHP substrate 1</shortName>
        <shortName>SHPS-1</shortName>
    </recommendedName>
    <alternativeName>
        <fullName>Brain Ig-like molecule with tyrosine-based activation motifs</fullName>
        <shortName>Bit</shortName>
    </alternativeName>
    <alternativeName>
        <fullName>CD172 antigen-like family member A</fullName>
    </alternativeName>
    <alternativeName>
        <fullName>Inhibitory receptor SHPS-1</fullName>
    </alternativeName>
    <alternativeName>
        <fullName>Macrophage fusion receptor</fullName>
    </alternativeName>
    <alternativeName>
        <fullName>MyD-1 antigen</fullName>
    </alternativeName>
    <alternativeName>
        <fullName>Signal-regulatory protein alpha-1</fullName>
        <shortName>Sirp-alpha-1</shortName>
    </alternativeName>
    <alternativeName>
        <fullName>Signal-regulatory protein alpha-2</fullName>
        <shortName>Sirp-alpha-2</shortName>
    </alternativeName>
    <alternativeName>
        <fullName>Signal-regulatory protein alpha-3</fullName>
        <shortName>Sirp-alpha-3</shortName>
    </alternativeName>
    <alternativeName>
        <fullName>p84</fullName>
    </alternativeName>
    <cdAntigenName>CD172a</cdAntigenName>
</protein>
<accession>P78324</accession>
<accession>A2A2E1</accession>
<accession>A8K411</accession>
<accession>B2R6C3</accession>
<accession>O00683</accession>
<accession>O43799</accession>
<accession>Q8N517</accession>
<accession>Q8TAL8</accession>
<accession>Q9H0Z2</accession>
<accession>Q9UDX2</accession>
<accession>Q9UIJ6</accession>
<accession>Q9Y4U9</accession>
<dbReference type="EMBL" id="D86043">
    <property type="protein sequence ID" value="BAA12974.1"/>
    <property type="molecule type" value="mRNA"/>
</dbReference>
<dbReference type="EMBL" id="Y10375">
    <property type="protein sequence ID" value="CAA71403.1"/>
    <property type="molecule type" value="mRNA"/>
</dbReference>
<dbReference type="EMBL" id="AB023430">
    <property type="protein sequence ID" value="BAA87929.1"/>
    <property type="molecule type" value="mRNA"/>
</dbReference>
<dbReference type="EMBL" id="AK290776">
    <property type="protein sequence ID" value="BAF83465.1"/>
    <property type="molecule type" value="mRNA"/>
</dbReference>
<dbReference type="EMBL" id="AK312521">
    <property type="protein sequence ID" value="BAG35420.1"/>
    <property type="molecule type" value="mRNA"/>
</dbReference>
<dbReference type="EMBL" id="AL034562">
    <property type="status" value="NOT_ANNOTATED_CDS"/>
    <property type="molecule type" value="Genomic_DNA"/>
</dbReference>
<dbReference type="EMBL" id="AL117335">
    <property type="status" value="NOT_ANNOTATED_CDS"/>
    <property type="molecule type" value="Genomic_DNA"/>
</dbReference>
<dbReference type="EMBL" id="BC026692">
    <property type="protein sequence ID" value="AAH26692.1"/>
    <property type="molecule type" value="mRNA"/>
</dbReference>
<dbReference type="EMBL" id="BC033092">
    <property type="protein sequence ID" value="AAH33092.1"/>
    <property type="molecule type" value="mRNA"/>
</dbReference>
<dbReference type="EMBL" id="BC038510">
    <property type="protein sequence ID" value="AAH38510.1"/>
    <property type="molecule type" value="mRNA"/>
</dbReference>
<dbReference type="EMBL" id="BC075849">
    <property type="protein sequence ID" value="AAH75849.1"/>
    <property type="molecule type" value="mRNA"/>
</dbReference>
<dbReference type="EMBL" id="Y11047">
    <property type="protein sequence ID" value="CAA71944.1"/>
    <property type="molecule type" value="mRNA"/>
</dbReference>
<dbReference type="CCDS" id="CCDS13022.1">
    <molecule id="P78324-1"/>
</dbReference>
<dbReference type="CCDS" id="CCDS82593.1">
    <molecule id="P78324-2"/>
</dbReference>
<dbReference type="PIR" id="JC5287">
    <property type="entry name" value="JC5287"/>
</dbReference>
<dbReference type="RefSeq" id="NP_001035111.1">
    <molecule id="P78324-1"/>
    <property type="nucleotide sequence ID" value="NM_001040022.1"/>
</dbReference>
<dbReference type="RefSeq" id="NP_001035112.1">
    <molecule id="P78324-1"/>
    <property type="nucleotide sequence ID" value="NM_001040023.2"/>
</dbReference>
<dbReference type="RefSeq" id="NP_001317657.1">
    <molecule id="P78324-2"/>
    <property type="nucleotide sequence ID" value="NM_001330728.1"/>
</dbReference>
<dbReference type="RefSeq" id="NP_542970.1">
    <molecule id="P78324-1"/>
    <property type="nucleotide sequence ID" value="NM_080792.3"/>
</dbReference>
<dbReference type="RefSeq" id="XP_005260727.1">
    <molecule id="P78324-2"/>
    <property type="nucleotide sequence ID" value="XM_005260670.4"/>
</dbReference>
<dbReference type="RefSeq" id="XP_024307604.1">
    <molecule id="P78324-2"/>
    <property type="nucleotide sequence ID" value="XM_024451836.2"/>
</dbReference>
<dbReference type="RefSeq" id="XP_047295872.1">
    <molecule id="P78324-1"/>
    <property type="nucleotide sequence ID" value="XM_047439916.1"/>
</dbReference>
<dbReference type="PDB" id="2JJS">
    <property type="method" value="X-ray"/>
    <property type="resolution" value="1.85 A"/>
    <property type="chains" value="A/B=31-149"/>
</dbReference>
<dbReference type="PDB" id="2JJT">
    <property type="method" value="X-ray"/>
    <property type="resolution" value="2.30 A"/>
    <property type="chains" value="A/B=31-149"/>
</dbReference>
<dbReference type="PDB" id="2UV3">
    <property type="method" value="X-ray"/>
    <property type="resolution" value="1.80 A"/>
    <property type="chains" value="A/B=31-149"/>
</dbReference>
<dbReference type="PDB" id="2WNG">
    <property type="method" value="X-ray"/>
    <property type="resolution" value="2.49 A"/>
    <property type="chains" value="A=31-350"/>
</dbReference>
<dbReference type="PDB" id="4CMM">
    <property type="method" value="X-ray"/>
    <property type="resolution" value="1.92 A"/>
    <property type="chains" value="A=31-149"/>
</dbReference>
<dbReference type="PDB" id="6BIT">
    <property type="method" value="X-ray"/>
    <property type="resolution" value="2.19 A"/>
    <property type="chains" value="G/H=31-147"/>
</dbReference>
<dbReference type="PDB" id="6NMR">
    <property type="method" value="X-ray"/>
    <property type="resolution" value="2.42 A"/>
    <property type="chains" value="E/I/M/S=31-149"/>
</dbReference>
<dbReference type="PDB" id="6NMS">
    <property type="method" value="X-ray"/>
    <property type="resolution" value="2.11 A"/>
    <property type="chains" value="C/S=31-149"/>
</dbReference>
<dbReference type="PDB" id="6NMT">
    <property type="method" value="X-ray"/>
    <property type="resolution" value="1.83 A"/>
    <property type="chains" value="C=31-149"/>
</dbReference>
<dbReference type="PDB" id="6NMU">
    <property type="method" value="X-ray"/>
    <property type="resolution" value="2.55 A"/>
    <property type="chains" value="C/S=31-149"/>
</dbReference>
<dbReference type="PDB" id="6NMV">
    <property type="method" value="X-ray"/>
    <property type="resolution" value="2.61 A"/>
    <property type="chains" value="S=31-149"/>
</dbReference>
<dbReference type="PDB" id="7KPG">
    <property type="method" value="X-ray"/>
    <property type="resolution" value="2.27 A"/>
    <property type="chains" value="S=33-147"/>
</dbReference>
<dbReference type="PDB" id="7ST5">
    <property type="method" value="X-ray"/>
    <property type="resolution" value="2.20 A"/>
    <property type="chains" value="A/F=31-149"/>
</dbReference>
<dbReference type="PDB" id="7YGG">
    <property type="method" value="X-ray"/>
    <property type="resolution" value="2.76 A"/>
    <property type="chains" value="A/B=31-171"/>
</dbReference>
<dbReference type="PDBsum" id="2JJS"/>
<dbReference type="PDBsum" id="2JJT"/>
<dbReference type="PDBsum" id="2UV3"/>
<dbReference type="PDBsum" id="2WNG"/>
<dbReference type="PDBsum" id="4CMM"/>
<dbReference type="PDBsum" id="6BIT"/>
<dbReference type="PDBsum" id="6NMR"/>
<dbReference type="PDBsum" id="6NMS"/>
<dbReference type="PDBsum" id="6NMT"/>
<dbReference type="PDBsum" id="6NMU"/>
<dbReference type="PDBsum" id="6NMV"/>
<dbReference type="PDBsum" id="7KPG"/>
<dbReference type="PDBsum" id="7ST5"/>
<dbReference type="PDBsum" id="7YGG"/>
<dbReference type="SMR" id="P78324"/>
<dbReference type="BioGRID" id="126752">
    <property type="interactions" value="89"/>
</dbReference>
<dbReference type="FunCoup" id="P78324">
    <property type="interactions" value="281"/>
</dbReference>
<dbReference type="IntAct" id="P78324">
    <property type="interactions" value="18"/>
</dbReference>
<dbReference type="MINT" id="P78324"/>
<dbReference type="STRING" id="9606.ENSP00000478763"/>
<dbReference type="GlyConnect" id="650">
    <property type="glycosylation" value="13 N-Linked glycans (4 sites)"/>
</dbReference>
<dbReference type="GlyCosmos" id="P78324">
    <property type="glycosylation" value="8 sites, 15 glycans"/>
</dbReference>
<dbReference type="GlyGen" id="P78324">
    <property type="glycosylation" value="10 sites, 48 N-linked glycans (4 sites), 1 O-linked glycan (3 sites)"/>
</dbReference>
<dbReference type="iPTMnet" id="P78324"/>
<dbReference type="PhosphoSitePlus" id="P78324"/>
<dbReference type="BioMuta" id="SIRPA"/>
<dbReference type="DMDM" id="327478534"/>
<dbReference type="jPOST" id="P78324"/>
<dbReference type="MassIVE" id="P78324"/>
<dbReference type="PaxDb" id="9606-ENSP00000382941"/>
<dbReference type="PeptideAtlas" id="P78324"/>
<dbReference type="ProteomicsDB" id="57564">
    <molecule id="P78324-1"/>
</dbReference>
<dbReference type="ProteomicsDB" id="57565">
    <molecule id="P78324-2"/>
</dbReference>
<dbReference type="ProteomicsDB" id="57566">
    <molecule id="P78324-4"/>
</dbReference>
<dbReference type="Pumba" id="P78324"/>
<dbReference type="ABCD" id="P78324">
    <property type="antibodies" value="101 sequenced antibodies"/>
</dbReference>
<dbReference type="Antibodypedia" id="3458">
    <property type="antibodies" value="1039 antibodies from 49 providers"/>
</dbReference>
<dbReference type="CPTC" id="P78324">
    <property type="antibodies" value="1 antibody"/>
</dbReference>
<dbReference type="DNASU" id="140885"/>
<dbReference type="Ensembl" id="ENST00000356025.7">
    <molecule id="P78324-1"/>
    <property type="protein sequence ID" value="ENSP00000348307.3"/>
    <property type="gene ID" value="ENSG00000198053.12"/>
</dbReference>
<dbReference type="Ensembl" id="ENST00000358771.5">
    <molecule id="P78324-1"/>
    <property type="protein sequence ID" value="ENSP00000351621.4"/>
    <property type="gene ID" value="ENSG00000198053.12"/>
</dbReference>
<dbReference type="Ensembl" id="ENST00000400068.7">
    <molecule id="P78324-1"/>
    <property type="protein sequence ID" value="ENSP00000382941.4"/>
    <property type="gene ID" value="ENSG00000198053.12"/>
</dbReference>
<dbReference type="Ensembl" id="ENST00000622179.4">
    <molecule id="P78324-2"/>
    <property type="protein sequence ID" value="ENSP00000478763.1"/>
    <property type="gene ID" value="ENSG00000198053.12"/>
</dbReference>
<dbReference type="GeneID" id="140885"/>
<dbReference type="KEGG" id="hsa:140885"/>
<dbReference type="MANE-Select" id="ENST00000358771.5">
    <property type="protein sequence ID" value="ENSP00000351621.4"/>
    <property type="RefSeq nucleotide sequence ID" value="NM_001040023.2"/>
    <property type="RefSeq protein sequence ID" value="NP_001035112.1"/>
</dbReference>
<dbReference type="UCSC" id="uc002wfq.3">
    <molecule id="P78324-1"/>
    <property type="organism name" value="human"/>
</dbReference>
<dbReference type="AGR" id="HGNC:9662"/>
<dbReference type="CTD" id="140885"/>
<dbReference type="DisGeNET" id="140885"/>
<dbReference type="GeneCards" id="SIRPA"/>
<dbReference type="HGNC" id="HGNC:9662">
    <property type="gene designation" value="SIRPA"/>
</dbReference>
<dbReference type="HPA" id="ENSG00000198053">
    <property type="expression patterns" value="Tissue enhanced (brain)"/>
</dbReference>
<dbReference type="MIM" id="602461">
    <property type="type" value="gene"/>
</dbReference>
<dbReference type="neXtProt" id="NX_P78324"/>
<dbReference type="OpenTargets" id="ENSG00000198053"/>
<dbReference type="PharmGKB" id="PA34006"/>
<dbReference type="VEuPathDB" id="HostDB:ENSG00000198053"/>
<dbReference type="eggNOG" id="ENOG502S1XD">
    <property type="taxonomic scope" value="Eukaryota"/>
</dbReference>
<dbReference type="GeneTree" id="ENSGT00960000186656"/>
<dbReference type="HOGENOM" id="CLU_044430_2_0_1"/>
<dbReference type="InParanoid" id="P78324"/>
<dbReference type="OMA" id="EVICEVN"/>
<dbReference type="OrthoDB" id="6370831at2759"/>
<dbReference type="PAN-GO" id="P78324">
    <property type="GO annotations" value="3 GO annotations based on evolutionary models"/>
</dbReference>
<dbReference type="PhylomeDB" id="P78324"/>
<dbReference type="TreeFam" id="TF341862"/>
<dbReference type="PathwayCommons" id="P78324"/>
<dbReference type="Reactome" id="R-HSA-202733">
    <property type="pathway name" value="Cell surface interactions at the vascular wall"/>
</dbReference>
<dbReference type="Reactome" id="R-HSA-391160">
    <property type="pathway name" value="Signal regulatory protein family interactions"/>
</dbReference>
<dbReference type="Reactome" id="R-HSA-6798695">
    <property type="pathway name" value="Neutrophil degranulation"/>
</dbReference>
<dbReference type="SignaLink" id="P78324"/>
<dbReference type="SIGNOR" id="P78324"/>
<dbReference type="BioGRID-ORCS" id="140885">
    <property type="hits" value="12 hits in 1157 CRISPR screens"/>
</dbReference>
<dbReference type="CD-CODE" id="FB4E32DD">
    <property type="entry name" value="Presynaptic clusters and postsynaptic densities"/>
</dbReference>
<dbReference type="ChiTaRS" id="SIRPA">
    <property type="organism name" value="human"/>
</dbReference>
<dbReference type="EvolutionaryTrace" id="P78324"/>
<dbReference type="GeneWiki" id="Signal-regulatory_protein_alpha"/>
<dbReference type="GenomeRNAi" id="140885"/>
<dbReference type="Pharos" id="P78324">
    <property type="development level" value="Tbio"/>
</dbReference>
<dbReference type="PRO" id="PR:P78324"/>
<dbReference type="Proteomes" id="UP000005640">
    <property type="component" value="Chromosome 20"/>
</dbReference>
<dbReference type="RNAct" id="P78324">
    <property type="molecule type" value="protein"/>
</dbReference>
<dbReference type="Bgee" id="ENSG00000198053">
    <property type="expression patterns" value="Expressed in right frontal lobe and 185 other cell types or tissues"/>
</dbReference>
<dbReference type="GO" id="GO:0009986">
    <property type="term" value="C:cell surface"/>
    <property type="evidence" value="ECO:0000314"/>
    <property type="project" value="ARUK-UCL"/>
</dbReference>
<dbReference type="GO" id="GO:0070062">
    <property type="term" value="C:extracellular exosome"/>
    <property type="evidence" value="ECO:0007005"/>
    <property type="project" value="UniProtKB"/>
</dbReference>
<dbReference type="GO" id="GO:0101003">
    <property type="term" value="C:ficolin-1-rich granule membrane"/>
    <property type="evidence" value="ECO:0000304"/>
    <property type="project" value="Reactome"/>
</dbReference>
<dbReference type="GO" id="GO:0016020">
    <property type="term" value="C:membrane"/>
    <property type="evidence" value="ECO:0000304"/>
    <property type="project" value="ProtInc"/>
</dbReference>
<dbReference type="GO" id="GO:0005886">
    <property type="term" value="C:plasma membrane"/>
    <property type="evidence" value="ECO:0000314"/>
    <property type="project" value="ARUK-UCL"/>
</dbReference>
<dbReference type="GO" id="GO:0070821">
    <property type="term" value="C:tertiary granule membrane"/>
    <property type="evidence" value="ECO:0000304"/>
    <property type="project" value="Reactome"/>
</dbReference>
<dbReference type="GO" id="GO:0098632">
    <property type="term" value="F:cell-cell adhesion mediator activity"/>
    <property type="evidence" value="ECO:0000353"/>
    <property type="project" value="ARUK-UCL"/>
</dbReference>
<dbReference type="GO" id="GO:0030695">
    <property type="term" value="F:GTPase regulator activity"/>
    <property type="evidence" value="ECO:0000250"/>
    <property type="project" value="ARUK-UCL"/>
</dbReference>
<dbReference type="GO" id="GO:1990405">
    <property type="term" value="F:protein antigen binding"/>
    <property type="evidence" value="ECO:0000353"/>
    <property type="project" value="ARUK-UCL"/>
</dbReference>
<dbReference type="GO" id="GO:0086080">
    <property type="term" value="F:protein binding involved in heterotypic cell-cell adhesion"/>
    <property type="evidence" value="ECO:0000250"/>
    <property type="project" value="ARUK-UCL"/>
</dbReference>
<dbReference type="GO" id="GO:0019903">
    <property type="term" value="F:protein phosphatase binding"/>
    <property type="evidence" value="ECO:0000250"/>
    <property type="project" value="ARUK-UCL"/>
</dbReference>
<dbReference type="GO" id="GO:0004864">
    <property type="term" value="F:protein phosphatase inhibitor activity"/>
    <property type="evidence" value="ECO:0000250"/>
    <property type="project" value="ARUK-UCL"/>
</dbReference>
<dbReference type="GO" id="GO:1990782">
    <property type="term" value="F:protein tyrosine kinase binding"/>
    <property type="evidence" value="ECO:0000250"/>
    <property type="project" value="ARUK-UCL"/>
</dbReference>
<dbReference type="GO" id="GO:0017124">
    <property type="term" value="F:SH3 domain binding"/>
    <property type="evidence" value="ECO:0007669"/>
    <property type="project" value="UniProtKB-KW"/>
</dbReference>
<dbReference type="GO" id="GO:0007155">
    <property type="term" value="P:cell adhesion"/>
    <property type="evidence" value="ECO:0000304"/>
    <property type="project" value="ProtInc"/>
</dbReference>
<dbReference type="GO" id="GO:0016477">
    <property type="term" value="P:cell migration"/>
    <property type="evidence" value="ECO:0000250"/>
    <property type="project" value="ARUK-UCL"/>
</dbReference>
<dbReference type="GO" id="GO:0070301">
    <property type="term" value="P:cellular response to hydrogen peroxide"/>
    <property type="evidence" value="ECO:0000250"/>
    <property type="project" value="ARUK-UCL"/>
</dbReference>
<dbReference type="GO" id="GO:0071347">
    <property type="term" value="P:cellular response to interleukin-1"/>
    <property type="evidence" value="ECO:0000250"/>
    <property type="project" value="ARUK-UCL"/>
</dbReference>
<dbReference type="GO" id="GO:0071349">
    <property type="term" value="P:cellular response to interleukin-12"/>
    <property type="evidence" value="ECO:0000315"/>
    <property type="project" value="ARUK-UCL"/>
</dbReference>
<dbReference type="GO" id="GO:0071346">
    <property type="term" value="P:cellular response to type II interferon"/>
    <property type="evidence" value="ECO:0000250"/>
    <property type="project" value="ARUK-UCL"/>
</dbReference>
<dbReference type="GO" id="GO:0035696">
    <property type="term" value="P:monocyte extravasation"/>
    <property type="evidence" value="ECO:0000250"/>
    <property type="project" value="ARUK-UCL"/>
</dbReference>
<dbReference type="GO" id="GO:0043124">
    <property type="term" value="P:negative regulation of canonical NF-kappaB signal transduction"/>
    <property type="evidence" value="ECO:0000250"/>
    <property type="project" value="ARUK-UCL"/>
</dbReference>
<dbReference type="GO" id="GO:0071650">
    <property type="term" value="P:negative regulation of chemokine (C-C motif) ligand 5 production"/>
    <property type="evidence" value="ECO:0000250"/>
    <property type="project" value="ARUK-UCL"/>
</dbReference>
<dbReference type="GO" id="GO:1900016">
    <property type="term" value="P:negative regulation of cytokine production involved in inflammatory response"/>
    <property type="evidence" value="ECO:0000250"/>
    <property type="project" value="ARUK-UCL"/>
</dbReference>
<dbReference type="GO" id="GO:0070373">
    <property type="term" value="P:negative regulation of ERK1 and ERK2 cascade"/>
    <property type="evidence" value="ECO:0000250"/>
    <property type="project" value="ARUK-UCL"/>
</dbReference>
<dbReference type="GO" id="GO:0050728">
    <property type="term" value="P:negative regulation of inflammatory response"/>
    <property type="evidence" value="ECO:0000315"/>
    <property type="project" value="ARUK-UCL"/>
</dbReference>
<dbReference type="GO" id="GO:0032688">
    <property type="term" value="P:negative regulation of interferon-beta production"/>
    <property type="evidence" value="ECO:0000250"/>
    <property type="project" value="ARUK-UCL"/>
</dbReference>
<dbReference type="GO" id="GO:0032715">
    <property type="term" value="P:negative regulation of interleukin-6 production"/>
    <property type="evidence" value="ECO:0000250"/>
    <property type="project" value="ARUK-UCL"/>
</dbReference>
<dbReference type="GO" id="GO:0046329">
    <property type="term" value="P:negative regulation of JNK cascade"/>
    <property type="evidence" value="ECO:0000250"/>
    <property type="project" value="ARUK-UCL"/>
</dbReference>
<dbReference type="GO" id="GO:0031665">
    <property type="term" value="P:negative regulation of lipopolysaccharide-mediated signaling pathway"/>
    <property type="evidence" value="ECO:0000250"/>
    <property type="project" value="ARUK-UCL"/>
</dbReference>
<dbReference type="GO" id="GO:0071641">
    <property type="term" value="P:negative regulation of macrophage inflammatory protein 1 alpha production"/>
    <property type="evidence" value="ECO:0000250"/>
    <property type="project" value="ARUK-UCL"/>
</dbReference>
<dbReference type="GO" id="GO:0045019">
    <property type="term" value="P:negative regulation of nitric oxide biosynthetic process"/>
    <property type="evidence" value="ECO:0000250"/>
    <property type="project" value="ARUK-UCL"/>
</dbReference>
<dbReference type="GO" id="GO:0050765">
    <property type="term" value="P:negative regulation of phagocytosis"/>
    <property type="evidence" value="ECO:0000250"/>
    <property type="project" value="ARUK-UCL"/>
</dbReference>
<dbReference type="GO" id="GO:0032720">
    <property type="term" value="P:negative regulation of tumor necrosis factor production"/>
    <property type="evidence" value="ECO:0000250"/>
    <property type="project" value="ARUK-UCL"/>
</dbReference>
<dbReference type="GO" id="GO:0050766">
    <property type="term" value="P:positive regulation of phagocytosis"/>
    <property type="evidence" value="ECO:0000318"/>
    <property type="project" value="GO_Central"/>
</dbReference>
<dbReference type="GO" id="GO:2000379">
    <property type="term" value="P:positive regulation of reactive oxygen species metabolic process"/>
    <property type="evidence" value="ECO:0000314"/>
    <property type="project" value="UniProtKB"/>
</dbReference>
<dbReference type="GO" id="GO:0050870">
    <property type="term" value="P:positive regulation of T cell activation"/>
    <property type="evidence" value="ECO:0000318"/>
    <property type="project" value="GO_Central"/>
</dbReference>
<dbReference type="GO" id="GO:0010468">
    <property type="term" value="P:regulation of gene expression"/>
    <property type="evidence" value="ECO:0000315"/>
    <property type="project" value="ARUK-UCL"/>
</dbReference>
<dbReference type="GO" id="GO:0032651">
    <property type="term" value="P:regulation of interleukin-1 beta production"/>
    <property type="evidence" value="ECO:0000250"/>
    <property type="project" value="ARUK-UCL"/>
</dbReference>
<dbReference type="GO" id="GO:0032675">
    <property type="term" value="P:regulation of interleukin-6 production"/>
    <property type="evidence" value="ECO:0000250"/>
    <property type="project" value="ARUK-UCL"/>
</dbReference>
<dbReference type="GO" id="GO:0045428">
    <property type="term" value="P:regulation of nitric oxide biosynthetic process"/>
    <property type="evidence" value="ECO:0000250"/>
    <property type="project" value="ARUK-UCL"/>
</dbReference>
<dbReference type="GO" id="GO:0032680">
    <property type="term" value="P:regulation of tumor necrosis factor production"/>
    <property type="evidence" value="ECO:0000316"/>
    <property type="project" value="ARUK-UCL"/>
</dbReference>
<dbReference type="GO" id="GO:0032649">
    <property type="term" value="P:regulation of type II interferon production"/>
    <property type="evidence" value="ECO:0000315"/>
    <property type="project" value="ARUK-UCL"/>
</dbReference>
<dbReference type="CDD" id="cd05772">
    <property type="entry name" value="IgC1_SIRP_domain_2"/>
    <property type="match status" value="1"/>
</dbReference>
<dbReference type="CDD" id="cd16085">
    <property type="entry name" value="IgC1_SIRP_domain_3"/>
    <property type="match status" value="1"/>
</dbReference>
<dbReference type="CDD" id="cd16097">
    <property type="entry name" value="IgV_SIRP"/>
    <property type="match status" value="1"/>
</dbReference>
<dbReference type="FunFam" id="2.60.40.10:FF:000490">
    <property type="entry name" value="Signal-regulatory protein beta 1"/>
    <property type="match status" value="1"/>
</dbReference>
<dbReference type="FunFam" id="2.60.40.10:FF:000295">
    <property type="entry name" value="Tyrosine-protein phosphatase non-receptor type substrate 1"/>
    <property type="match status" value="1"/>
</dbReference>
<dbReference type="FunFam" id="2.60.40.10:FF:000454">
    <property type="entry name" value="Tyrosine-protein phosphatase non-receptor type substrate 1"/>
    <property type="match status" value="1"/>
</dbReference>
<dbReference type="Gene3D" id="2.60.40.10">
    <property type="entry name" value="Immunoglobulins"/>
    <property type="match status" value="3"/>
</dbReference>
<dbReference type="InterPro" id="IPR051755">
    <property type="entry name" value="Ig-like_CS_Receptor"/>
</dbReference>
<dbReference type="InterPro" id="IPR007110">
    <property type="entry name" value="Ig-like_dom"/>
</dbReference>
<dbReference type="InterPro" id="IPR036179">
    <property type="entry name" value="Ig-like_dom_sf"/>
</dbReference>
<dbReference type="InterPro" id="IPR013783">
    <property type="entry name" value="Ig-like_fold"/>
</dbReference>
<dbReference type="InterPro" id="IPR003597">
    <property type="entry name" value="Ig_C1-set"/>
</dbReference>
<dbReference type="InterPro" id="IPR003599">
    <property type="entry name" value="Ig_sub"/>
</dbReference>
<dbReference type="InterPro" id="IPR013106">
    <property type="entry name" value="Ig_V-set"/>
</dbReference>
<dbReference type="PANTHER" id="PTHR19971">
    <property type="entry name" value="SIGNAL-REGULATORY PROTEIN BETA"/>
    <property type="match status" value="1"/>
</dbReference>
<dbReference type="Pfam" id="PF07654">
    <property type="entry name" value="C1-set"/>
    <property type="match status" value="2"/>
</dbReference>
<dbReference type="Pfam" id="PF07686">
    <property type="entry name" value="V-set"/>
    <property type="match status" value="1"/>
</dbReference>
<dbReference type="SMART" id="SM00409">
    <property type="entry name" value="IG"/>
    <property type="match status" value="2"/>
</dbReference>
<dbReference type="SMART" id="SM00407">
    <property type="entry name" value="IGc1"/>
    <property type="match status" value="2"/>
</dbReference>
<dbReference type="SMART" id="SM00406">
    <property type="entry name" value="IGv"/>
    <property type="match status" value="1"/>
</dbReference>
<dbReference type="SUPFAM" id="SSF48726">
    <property type="entry name" value="Immunoglobulin"/>
    <property type="match status" value="3"/>
</dbReference>
<dbReference type="PROSITE" id="PS50835">
    <property type="entry name" value="IG_LIKE"/>
    <property type="match status" value="3"/>
</dbReference>
<name>SHPS1_HUMAN</name>
<evidence type="ECO:0000250" key="1"/>
<evidence type="ECO:0000250" key="2">
    <source>
        <dbReference type="UniProtKB" id="P97710"/>
    </source>
</evidence>
<evidence type="ECO:0000255" key="3"/>
<evidence type="ECO:0000255" key="4">
    <source>
        <dbReference type="PROSITE-ProRule" id="PRU00114"/>
    </source>
</evidence>
<evidence type="ECO:0000256" key="5">
    <source>
        <dbReference type="SAM" id="MobiDB-lite"/>
    </source>
</evidence>
<evidence type="ECO:0000269" key="6">
    <source>
    </source>
</evidence>
<evidence type="ECO:0000269" key="7">
    <source>
    </source>
</evidence>
<evidence type="ECO:0000269" key="8">
    <source>
    </source>
</evidence>
<evidence type="ECO:0000269" key="9">
    <source>
    </source>
</evidence>
<evidence type="ECO:0000269" key="10">
    <source>
    </source>
</evidence>
<evidence type="ECO:0000269" key="11">
    <source>
    </source>
</evidence>
<evidence type="ECO:0000269" key="12">
    <source>
    </source>
</evidence>
<evidence type="ECO:0000269" key="13">
    <source>
    </source>
</evidence>
<evidence type="ECO:0000269" key="14">
    <source>
    </source>
</evidence>
<evidence type="ECO:0000269" key="15">
    <source>
    </source>
</evidence>
<evidence type="ECO:0000269" key="16">
    <source>
    </source>
</evidence>
<evidence type="ECO:0000269" key="17">
    <source>
    </source>
</evidence>
<evidence type="ECO:0000303" key="18">
    <source>
    </source>
</evidence>
<evidence type="ECO:0000305" key="19"/>
<evidence type="ECO:0007744" key="20">
    <source>
    </source>
</evidence>
<evidence type="ECO:0007829" key="21">
    <source>
        <dbReference type="PDB" id="2UV3"/>
    </source>
</evidence>
<evidence type="ECO:0007829" key="22">
    <source>
        <dbReference type="PDB" id="2WNG"/>
    </source>
</evidence>
<evidence type="ECO:0007829" key="23">
    <source>
        <dbReference type="PDB" id="6NMU"/>
    </source>
</evidence>
<proteinExistence type="evidence at protein level"/>
<comment type="function">
    <text evidence="1 2 6 8 15">Immunoglobulin-like cell surface receptor for CD47. Acts as docking protein and induces translocation of PTPN6, PTPN11 and other binding partners from the cytosol to the plasma membrane. Supports adhesion of cerebellar neurons, neurite outgrowth and glial cell attachment. May play a key role in intracellular signaling during synaptogenesis and in synaptic function (By similarity). Involved in the negative regulation of receptor tyrosine kinase-coupled cellular responses induced by cell adhesion, growth factors or insulin. Mediates negative regulation of phagocytosis, mast cell activation and dendritic cell activation. CD47 binding prevents maturation of immature dendritic cells and inhibits cytokine production by mature dendritic cells. Plays a role in antiviral immunity and limits new world arenavirus infection by decreasing virus internalization (By similarity). Receptor for THBS1 (PubMed:24511121). Interaction with THBS1 stimulates phosphorylation of SIRPA (By similarity). In response to THBS1, involved in ROS signaling in non-phagocytic cells, stimulating NADPH oxidase-derived ROS production (PubMed:24511121).</text>
</comment>
<comment type="subunit">
    <text evidence="1 13 15">Binds PTPN11 when tyrosine-phosphorylated, except in macrophages, where it primarily binds PTPN6. Binds GRB2 in vitro. Binds FGR (By similarity). Binds JAK2 irrespective of its phosphorylation status and forms a stable complex. Binds SCAP1 and/or SCAP2. The resulting complex recruits FYB1. Binds PTK2B. Interacts with TRIM2 (By similarity).</text>
</comment>
<comment type="interaction">
    <interactant intactId="EBI-745147">
        <id>P78324</id>
    </interactant>
    <interactant intactId="EBI-1268321">
        <id>Q08722</id>
        <label>CD47</label>
    </interactant>
    <organismsDiffer>false</organismsDiffer>
    <experiments>2</experiments>
</comment>
<comment type="subcellular location">
    <subcellularLocation>
        <location>Membrane</location>
        <topology>Single-pass type I membrane protein</topology>
    </subcellularLocation>
</comment>
<comment type="alternative products">
    <event type="alternative splicing"/>
    <isoform>
        <id>P78324-1</id>
        <name>1</name>
        <sequence type="displayed"/>
    </isoform>
    <isoform>
        <id>P78324-2</id>
        <name>2</name>
        <sequence type="described" ref="VSP_007030"/>
    </isoform>
    <isoform>
        <id>P78324-4</id>
        <name>4</name>
        <sequence type="described" ref="VSP_040799"/>
    </isoform>
</comment>
<comment type="tissue specificity">
    <text>Ubiquitous. Highly expressed in brain. Detected on myeloid cells, but not T-cells. Detected at lower levels in heart, placenta, lung, testis, ovary, colon, liver, small intestine, prostate, spleen, kidney, skeletal muscle and pancreas.</text>
</comment>
<comment type="PTM">
    <text evidence="11 14 16">N-glycosylated.</text>
</comment>
<comment type="PTM">
    <text evidence="7 16">Phosphorylated on tyrosine residues in response to stimulation with EGF, growth hormone, insulin and PDGF. Dephosphorylated by PTPN11.</text>
</comment>
<feature type="signal peptide" evidence="3">
    <location>
        <begin position="1"/>
        <end position="30"/>
    </location>
</feature>
<feature type="chain" id="PRO_0000014941" description="Tyrosine-protein phosphatase non-receptor type substrate 1">
    <location>
        <begin position="31"/>
        <end position="504"/>
    </location>
</feature>
<feature type="topological domain" description="Extracellular" evidence="3">
    <location>
        <begin position="31"/>
        <end position="373"/>
    </location>
</feature>
<feature type="transmembrane region" description="Helical" evidence="3">
    <location>
        <begin position="374"/>
        <end position="394"/>
    </location>
</feature>
<feature type="topological domain" description="Cytoplasmic" evidence="3">
    <location>
        <begin position="395"/>
        <end position="504"/>
    </location>
</feature>
<feature type="domain" description="Ig-like V-type">
    <location>
        <begin position="32"/>
        <end position="137"/>
    </location>
</feature>
<feature type="domain" description="Ig-like C1-type 1">
    <location>
        <begin position="148"/>
        <end position="247"/>
    </location>
</feature>
<feature type="domain" description="Ig-like C1-type 2">
    <location>
        <begin position="254"/>
        <end position="348"/>
    </location>
</feature>
<feature type="region of interest" description="Disordered" evidence="5">
    <location>
        <begin position="336"/>
        <end position="364"/>
    </location>
</feature>
<feature type="region of interest" description="Disordered" evidence="5">
    <location>
        <begin position="402"/>
        <end position="504"/>
    </location>
</feature>
<feature type="short sequence motif" description="SH2-binding" evidence="3">
    <location>
        <begin position="429"/>
        <end position="432"/>
    </location>
</feature>
<feature type="short sequence motif" description="SH3-binding" evidence="3">
    <location>
        <begin position="439"/>
        <end position="444"/>
    </location>
</feature>
<feature type="short sequence motif" description="SH2-binding" evidence="3">
    <location>
        <begin position="453"/>
        <end position="456"/>
    </location>
</feature>
<feature type="short sequence motif" description="SH2-binding" evidence="3">
    <location>
        <begin position="470"/>
        <end position="473"/>
    </location>
</feature>
<feature type="short sequence motif" description="SH2-binding" evidence="3">
    <location>
        <begin position="496"/>
        <end position="499"/>
    </location>
</feature>
<feature type="compositionally biased region" description="Basic and acidic residues" evidence="5">
    <location>
        <begin position="336"/>
        <end position="355"/>
    </location>
</feature>
<feature type="compositionally biased region" description="Basic and acidic residues" evidence="5">
    <location>
        <begin position="409"/>
        <end position="421"/>
    </location>
</feature>
<feature type="compositionally biased region" description="Polar residues" evidence="5">
    <location>
        <begin position="446"/>
        <end position="467"/>
    </location>
</feature>
<feature type="modified residue" description="Phosphotyrosine; by Tyr-kinases" evidence="3">
    <location>
        <position position="429"/>
    </location>
</feature>
<feature type="modified residue" description="Phosphotyrosine; by Tyr-kinases" evidence="3">
    <location>
        <position position="453"/>
    </location>
</feature>
<feature type="modified residue" description="Phosphotyrosine; by Tyr-kinases" evidence="2">
    <location>
        <position position="470"/>
    </location>
</feature>
<feature type="modified residue" description="Phosphotyrosine" evidence="20">
    <location>
        <position position="496"/>
    </location>
</feature>
<feature type="glycosylation site" description="N-linked (GlcNAc...) asparagine" evidence="11">
    <location>
        <position position="245"/>
    </location>
</feature>
<feature type="glycosylation site" description="N-linked (GlcNAc...) asparagine" evidence="14">
    <location>
        <position position="270"/>
    </location>
</feature>
<feature type="glycosylation site" description="N-linked (GlcNAc...) asparagine" evidence="14">
    <location>
        <position position="292"/>
    </location>
</feature>
<feature type="glycosylation site" description="N-linked (GlcNAc...) asparagine" evidence="3">
    <location>
        <position position="319"/>
    </location>
</feature>
<feature type="disulfide bond" evidence="4 12 13">
    <location>
        <begin position="55"/>
        <end position="121"/>
    </location>
</feature>
<feature type="disulfide bond" evidence="4">
    <location>
        <begin position="170"/>
        <end position="228"/>
    </location>
</feature>
<feature type="disulfide bond" evidence="4">
    <location>
        <begin position="273"/>
        <end position="331"/>
    </location>
</feature>
<feature type="splice variant" id="VSP_040799" description="In isoform 4." evidence="19">
    <location>
        <position position="130"/>
    </location>
</feature>
<feature type="splice variant" id="VSP_007030" description="In isoform 2." evidence="18">
    <original>Q</original>
    <variation>QVQSL</variation>
    <location>
        <position position="422"/>
    </location>
</feature>
<feature type="sequence variant" id="VAR_015462">
    <original>PA</original>
    <variation>RS</variation>
    <location>
        <begin position="6"/>
        <end position="7"/>
    </location>
</feature>
<feature type="sequence variant" id="VAR_015463">
    <original>A</original>
    <variation>P</variation>
    <location>
        <position position="20"/>
    </location>
</feature>
<feature type="sequence variant" id="VAR_015464" description="In dbSNP:rs1349896458.">
    <original>D</original>
    <variation>E</variation>
    <location>
        <position position="40"/>
    </location>
</feature>
<feature type="sequence variant" id="VAR_015465" description="In dbSNP:rs143735290." evidence="9 10 16 17">
    <original>L</original>
    <variation>S</variation>
    <location>
        <position position="44"/>
    </location>
</feature>
<feature type="sequence variant" id="VAR_015466" description="In dbSNP:rs17855609." evidence="9 10 16 17">
    <original>T</original>
    <variation>S</variation>
    <location>
        <position position="50"/>
    </location>
</feature>
<feature type="sequence variant" id="VAR_015468" description="In dbSNP:rs17855610." evidence="9 10 16 17">
    <original>T</original>
    <variation>I</variation>
    <location>
        <position position="52"/>
    </location>
</feature>
<feature type="sequence variant" id="VAR_015470" description="In dbSNP:rs17855611." evidence="9 10 16 17">
    <original>R</original>
    <variation>H</variation>
    <location>
        <position position="54"/>
    </location>
</feature>
<feature type="sequence variant" id="VAR_015471" description="In dbSNP:rs17855612." evidence="9 10 16 17">
    <original>A</original>
    <variation>V</variation>
    <location>
        <position position="57"/>
    </location>
</feature>
<feature type="sequence variant" id="VAR_015472" description="In dbSNP:rs1371837011.">
    <original>I</original>
    <variation>N</variation>
    <location>
        <position position="61"/>
    </location>
</feature>
<feature type="sequence variant" id="VAR_015473">
    <original>W</original>
    <variation>R</variation>
    <location>
        <position position="68"/>
    </location>
</feature>
<feature type="sequence variant" id="VAR_015474" description="In dbSNP:rs1057114." evidence="9 10 16 17">
    <original>G</original>
    <variation>A</variation>
    <location>
        <position position="75"/>
    </location>
</feature>
<feature type="sequence variant" id="VAR_015475" description="In dbSNP:rs1182420620.">
    <original>E</original>
    <variation>K</variation>
    <location>
        <position position="77"/>
    </location>
</feature>
<feature type="sequence variant" id="VAR_015477">
    <original>N</original>
    <variation>H</variation>
    <location>
        <position position="81"/>
    </location>
</feature>
<feature type="sequence variant" id="VAR_015478" description="In dbSNP:rs138283486." evidence="9 10 16 17">
    <original>D</original>
    <variation>E</variation>
    <location>
        <position position="95"/>
    </location>
</feature>
<feature type="sequence variant" id="VAR_015479" evidence="9 10 16 17">
    <original>L</original>
    <variation>S</variation>
    <location>
        <position position="96"/>
    </location>
</feature>
<feature type="sequence variant" id="VAR_015480" description="Requires 2 nucleotide substitutions; dbSNP:rs386811662." evidence="9 10 16 17">
    <original>N</original>
    <variation>E</variation>
    <location>
        <position position="100"/>
    </location>
</feature>
<feature type="sequence variant" id="VAR_015483" description="In dbSNP:rs17855615." evidence="9 10 16 17">
    <original>R</original>
    <variation>S</variation>
    <location>
        <position position="107"/>
    </location>
</feature>
<feature type="sequence variant" id="VAR_015484" description="In dbSNP:rs17855616." evidence="9 10 16 17">
    <original>G</original>
    <variation>S</variation>
    <location>
        <position position="109"/>
    </location>
</feature>
<feature type="sequence variant" id="VAR_015485" description="In dbSNP:rs767136065.">
    <original>R</original>
    <variation>Q</variation>
    <location>
        <position position="125"/>
    </location>
</feature>
<feature type="sequence variant" id="VAR_015486" description="Requires 2 nucleotide substitutions; dbSNP:rs386811663." evidence="9 10 16 17">
    <original>V</original>
    <variation>T</variation>
    <location>
        <position position="132"/>
    </location>
</feature>
<feature type="sequence variant" id="VAR_015487">
    <original>F</original>
    <variation>L</variation>
    <location>
        <position position="134"/>
    </location>
</feature>
<feature type="sequence variant" id="VAR_015488" description="Requires 2 nucleotide substitutions.">
    <original>Q</original>
    <variation>D</variation>
    <location>
        <position position="163"/>
    </location>
</feature>
<feature type="sequence variant" id="VAR_015489">
    <original>T</original>
    <variation>S</variation>
    <location>
        <position position="181"/>
    </location>
</feature>
<feature type="sequence variant" id="VAR_015490">
    <original>E</original>
    <variation>Q</variation>
    <location>
        <position position="190"/>
    </location>
</feature>
<feature type="sequence variant" id="VAR_015491">
    <original>VG</original>
    <variation>AR</variation>
    <location>
        <begin position="201"/>
        <end position="202"/>
    </location>
</feature>
<feature type="sequence variant" id="VAR_015492">
    <original>K</original>
    <variation>N</variation>
    <location>
        <position position="214"/>
    </location>
</feature>
<feature type="sequence variant" id="VAR_015493">
    <original>E</original>
    <variation>G</variation>
    <location>
        <position position="220"/>
    </location>
</feature>
<feature type="sequence variant" id="VAR_015494" description="In dbSNP:rs143385810.">
    <original>V</original>
    <variation>I</variation>
    <location>
        <position position="222"/>
    </location>
</feature>
<feature type="sequence variant" id="VAR_015495">
    <original>Q</original>
    <variation>R</variation>
    <location>
        <position position="236"/>
    </location>
</feature>
<feature type="sequence variant" id="VAR_015496">
    <original>PL</original>
    <variation>SF</variation>
    <location>
        <begin position="239"/>
        <end position="240"/>
    </location>
</feature>
<feature type="sequence variant" id="VAR_015497" description="In dbSNP:rs377448893.">
    <original>R</original>
    <variation>Q</variation>
    <location>
        <position position="251"/>
    </location>
</feature>
<feature type="sequence variant" id="VAR_015498">
    <original>Q</original>
    <variation>L</variation>
    <location>
        <position position="261"/>
    </location>
</feature>
<feature type="sequence variant" id="VAR_015499" description="In dbSNP:rs754806675.">
    <original>V</original>
    <variation>M</variation>
    <location>
        <position position="263"/>
    </location>
</feature>
<feature type="sequence variant" id="VAR_015500">
    <original>V</original>
    <variation>I</variation>
    <location>
        <position position="271"/>
    </location>
</feature>
<feature type="sequence variant" id="VAR_015501">
    <original>R</original>
    <variation>T</variation>
    <location>
        <position position="276"/>
    </location>
</feature>
<feature type="sequence variant" id="VAR_015502" description="In dbSNP:rs2422666.">
    <original>V</original>
    <variation>L</variation>
    <location>
        <position position="302"/>
    </location>
</feature>
<feature type="sequence variant" id="VAR_015503">
    <original>P</original>
    <variation>S</variation>
    <location>
        <position position="339"/>
    </location>
</feature>
<feature type="sequence variant" id="VAR_015504" description="In dbSNP:rs138876160.">
    <original>P</original>
    <variation>L</variation>
    <location>
        <position position="353"/>
    </location>
</feature>
<feature type="sequence variant" id="VAR_015505" description="In dbSNP:rs1200233096.">
    <original>G</original>
    <variation>S</variation>
    <location>
        <position position="357"/>
    </location>
</feature>
<feature type="sequence variant" id="VAR_015506">
    <original>S</original>
    <variation>P</variation>
    <location>
        <position position="367"/>
    </location>
</feature>
<feature type="sequence variant" id="VAR_015507" description="In dbSNP:rs778218860.">
    <original>R</original>
    <variation>Q</variation>
    <location>
        <position position="370"/>
    </location>
</feature>
<feature type="sequence variant" id="VAR_015508">
    <original>A</original>
    <variation>E</variation>
    <location>
        <position position="389"/>
    </location>
</feature>
<feature type="sequence variant" id="VAR_015509">
    <original>Q</original>
    <variation>R</variation>
    <location>
        <position position="443"/>
    </location>
</feature>
<feature type="sequence variant" id="VAR_015510" description="In dbSNP:rs1168490568.">
    <original>P</original>
    <variation>L</variation>
    <location>
        <position position="460"/>
    </location>
</feature>
<feature type="sequence variant" id="VAR_015511" description="Requires 2 nucleotide substitutions.">
    <original>A</original>
    <variation>L</variation>
    <location>
        <position position="486"/>
    </location>
</feature>
<feature type="sequence variant" id="VAR_015512" description="In dbSNP:rs367629199.">
    <original>P</original>
    <variation>L</variation>
    <location>
        <position position="491"/>
    </location>
</feature>
<feature type="sequence conflict" description="In Ref. 7; CAA71944." evidence="19" ref="7">
    <original>T</original>
    <variation>I</variation>
    <location>
        <position position="259"/>
    </location>
</feature>
<feature type="sequence conflict" description="In Ref. 7; CAA71944." evidence="19" ref="7">
    <original>R</original>
    <variation>K</variation>
    <location>
        <position position="503"/>
    </location>
</feature>
<feature type="strand" evidence="21">
    <location>
        <begin position="41"/>
        <end position="46"/>
    </location>
</feature>
<feature type="strand" evidence="21">
    <location>
        <begin position="51"/>
        <end position="53"/>
    </location>
</feature>
<feature type="strand" evidence="21">
    <location>
        <begin position="56"/>
        <end position="58"/>
    </location>
</feature>
<feature type="strand" evidence="21">
    <location>
        <begin position="66"/>
        <end position="70"/>
    </location>
</feature>
<feature type="strand" evidence="21">
    <location>
        <begin position="77"/>
        <end position="85"/>
    </location>
</feature>
<feature type="strand" evidence="21">
    <location>
        <begin position="90"/>
        <end position="94"/>
    </location>
</feature>
<feature type="strand" evidence="23">
    <location>
        <begin position="96"/>
        <end position="98"/>
    </location>
</feature>
<feature type="strand" evidence="21">
    <location>
        <begin position="106"/>
        <end position="110"/>
    </location>
</feature>
<feature type="helix" evidence="21">
    <location>
        <begin position="113"/>
        <end position="115"/>
    </location>
</feature>
<feature type="strand" evidence="21">
    <location>
        <begin position="117"/>
        <end position="125"/>
    </location>
</feature>
<feature type="strand" evidence="21">
    <location>
        <begin position="127"/>
        <end position="129"/>
    </location>
</feature>
<feature type="strand" evidence="21">
    <location>
        <begin position="132"/>
        <end position="136"/>
    </location>
</feature>
<feature type="strand" evidence="21">
    <location>
        <begin position="140"/>
        <end position="145"/>
    </location>
</feature>
<feature type="strand" evidence="22">
    <location>
        <begin position="152"/>
        <end position="154"/>
    </location>
</feature>
<feature type="strand" evidence="22">
    <location>
        <begin position="165"/>
        <end position="178"/>
    </location>
</feature>
<feature type="strand" evidence="22">
    <location>
        <begin position="181"/>
        <end position="186"/>
    </location>
</feature>
<feature type="strand" evidence="22">
    <location>
        <begin position="194"/>
        <end position="199"/>
    </location>
</feature>
<feature type="strand" evidence="22">
    <location>
        <begin position="207"/>
        <end position="216"/>
    </location>
</feature>
<feature type="helix" evidence="22">
    <location>
        <begin position="221"/>
        <end position="223"/>
    </location>
</feature>
<feature type="strand" evidence="22">
    <location>
        <begin position="225"/>
        <end position="231"/>
    </location>
</feature>
<feature type="strand" evidence="22">
    <location>
        <begin position="240"/>
        <end position="245"/>
    </location>
</feature>
<feature type="helix" evidence="22">
    <location>
        <begin position="246"/>
        <end position="248"/>
    </location>
</feature>
<feature type="strand" evidence="22">
    <location>
        <begin position="255"/>
        <end position="261"/>
    </location>
</feature>
<feature type="strand" evidence="22">
    <location>
        <begin position="269"/>
        <end position="281"/>
    </location>
</feature>
<feature type="strand" evidence="22">
    <location>
        <begin position="283"/>
        <end position="289"/>
    </location>
</feature>
<feature type="strand" evidence="22">
    <location>
        <begin position="292"/>
        <end position="298"/>
    </location>
</feature>
<feature type="strand" evidence="22">
    <location>
        <begin position="310"/>
        <end position="318"/>
    </location>
</feature>
<feature type="strand" evidence="22">
    <location>
        <begin position="328"/>
        <end position="335"/>
    </location>
</feature>
<feature type="strand" evidence="22">
    <location>
        <begin position="341"/>
        <end position="346"/>
    </location>
</feature>
<reference key="1">
    <citation type="journal article" date="1997" name="Biochem. Biophys. Res. Commun.">
        <title>Mouse and human SHPS-1: molecular cloning of cDNAs and chromosomal localization of genes.</title>
        <authorList>
            <person name="Yamao T."/>
            <person name="Matozaki T."/>
            <person name="Amano K."/>
            <person name="Matsuda Y."/>
            <person name="Takahashi N."/>
            <person name="Ochi F."/>
            <person name="Fujioka Y."/>
            <person name="Kasuga M."/>
        </authorList>
    </citation>
    <scope>NUCLEOTIDE SEQUENCE [MRNA] (ISOFORM 1)</scope>
    <scope>VARIANTS SER-44; SER-50; ILE-52; HIS-54; VAL-57; ALA-75; GLU-95; SER-96; GLU-100; SER-107; SER-109 AND THR-132</scope>
    <source>
        <tissue>Brain</tissue>
    </source>
</reference>
<reference key="2">
    <citation type="journal article" date="1997" name="Nature">
        <title>A family of proteins that inhibit signalling through tyrosine kinase receptors.</title>
        <authorList>
            <person name="Kharitonenkov A."/>
            <person name="Chen Z."/>
            <person name="Sures I."/>
            <person name="Wang H."/>
            <person name="Schilling J."/>
            <person name="Ullrich A."/>
        </authorList>
    </citation>
    <scope>NUCLEOTIDE SEQUENCE [MRNA] (ISOFORM 1)</scope>
    <scope>POLYMORPHISM</scope>
    <scope>PHOSPHORYLATION</scope>
    <scope>GLYCOSYLATION</scope>
    <scope>INTERACTION WITH PTPN11; PTPN6 AND GRB2</scope>
    <scope>VARIANTS SER-44; SER-50; ILE-52; HIS-54; VAL-57; ALA-75; GLU-95; SER-96; GLU-100; SER-107; SER-109 AND THR-132</scope>
    <source>
        <tissue>Placenta</tissue>
    </source>
</reference>
<reference key="3">
    <citation type="journal article" date="1999" name="Biochem. J.">
        <title>Gene structure of mouse BIT/SHPS-1.</title>
        <authorList>
            <person name="Sano S."/>
            <person name="Ohnishi H."/>
            <person name="Kubota M."/>
        </authorList>
    </citation>
    <scope>NUCLEOTIDE SEQUENCE [MRNA] (ISOFORM 1)</scope>
    <source>
        <tissue>Brain</tissue>
    </source>
</reference>
<reference key="4">
    <citation type="journal article" date="2004" name="Nat. Genet.">
        <title>Complete sequencing and characterization of 21,243 full-length human cDNAs.</title>
        <authorList>
            <person name="Ota T."/>
            <person name="Suzuki Y."/>
            <person name="Nishikawa T."/>
            <person name="Otsuki T."/>
            <person name="Sugiyama T."/>
            <person name="Irie R."/>
            <person name="Wakamatsu A."/>
            <person name="Hayashi K."/>
            <person name="Sato H."/>
            <person name="Nagai K."/>
            <person name="Kimura K."/>
            <person name="Makita H."/>
            <person name="Sekine M."/>
            <person name="Obayashi M."/>
            <person name="Nishi T."/>
            <person name="Shibahara T."/>
            <person name="Tanaka T."/>
            <person name="Ishii S."/>
            <person name="Yamamoto J."/>
            <person name="Saito K."/>
            <person name="Kawai Y."/>
            <person name="Isono Y."/>
            <person name="Nakamura Y."/>
            <person name="Nagahari K."/>
            <person name="Murakami K."/>
            <person name="Yasuda T."/>
            <person name="Iwayanagi T."/>
            <person name="Wagatsuma M."/>
            <person name="Shiratori A."/>
            <person name="Sudo H."/>
            <person name="Hosoiri T."/>
            <person name="Kaku Y."/>
            <person name="Kodaira H."/>
            <person name="Kondo H."/>
            <person name="Sugawara M."/>
            <person name="Takahashi M."/>
            <person name="Kanda K."/>
            <person name="Yokoi T."/>
            <person name="Furuya T."/>
            <person name="Kikkawa E."/>
            <person name="Omura Y."/>
            <person name="Abe K."/>
            <person name="Kamihara K."/>
            <person name="Katsuta N."/>
            <person name="Sato K."/>
            <person name="Tanikawa M."/>
            <person name="Yamazaki M."/>
            <person name="Ninomiya K."/>
            <person name="Ishibashi T."/>
            <person name="Yamashita H."/>
            <person name="Murakawa K."/>
            <person name="Fujimori K."/>
            <person name="Tanai H."/>
            <person name="Kimata M."/>
            <person name="Watanabe M."/>
            <person name="Hiraoka S."/>
            <person name="Chiba Y."/>
            <person name="Ishida S."/>
            <person name="Ono Y."/>
            <person name="Takiguchi S."/>
            <person name="Watanabe S."/>
            <person name="Yosida M."/>
            <person name="Hotuta T."/>
            <person name="Kusano J."/>
            <person name="Kanehori K."/>
            <person name="Takahashi-Fujii A."/>
            <person name="Hara H."/>
            <person name="Tanase T.-O."/>
            <person name="Nomura Y."/>
            <person name="Togiya S."/>
            <person name="Komai F."/>
            <person name="Hara R."/>
            <person name="Takeuchi K."/>
            <person name="Arita M."/>
            <person name="Imose N."/>
            <person name="Musashino K."/>
            <person name="Yuuki H."/>
            <person name="Oshima A."/>
            <person name="Sasaki N."/>
            <person name="Aotsuka S."/>
            <person name="Yoshikawa Y."/>
            <person name="Matsunawa H."/>
            <person name="Ichihara T."/>
            <person name="Shiohata N."/>
            <person name="Sano S."/>
            <person name="Moriya S."/>
            <person name="Momiyama H."/>
            <person name="Satoh N."/>
            <person name="Takami S."/>
            <person name="Terashima Y."/>
            <person name="Suzuki O."/>
            <person name="Nakagawa S."/>
            <person name="Senoh A."/>
            <person name="Mizoguchi H."/>
            <person name="Goto Y."/>
            <person name="Shimizu F."/>
            <person name="Wakebe H."/>
            <person name="Hishigaki H."/>
            <person name="Watanabe T."/>
            <person name="Sugiyama A."/>
            <person name="Takemoto M."/>
            <person name="Kawakami B."/>
            <person name="Yamazaki M."/>
            <person name="Watanabe K."/>
            <person name="Kumagai A."/>
            <person name="Itakura S."/>
            <person name="Fukuzumi Y."/>
            <person name="Fujimori Y."/>
            <person name="Komiyama M."/>
            <person name="Tashiro H."/>
            <person name="Tanigami A."/>
            <person name="Fujiwara T."/>
            <person name="Ono T."/>
            <person name="Yamada K."/>
            <person name="Fujii Y."/>
            <person name="Ozaki K."/>
            <person name="Hirao M."/>
            <person name="Ohmori Y."/>
            <person name="Kawabata A."/>
            <person name="Hikiji T."/>
            <person name="Kobatake N."/>
            <person name="Inagaki H."/>
            <person name="Ikema Y."/>
            <person name="Okamoto S."/>
            <person name="Okitani R."/>
            <person name="Kawakami T."/>
            <person name="Noguchi S."/>
            <person name="Itoh T."/>
            <person name="Shigeta K."/>
            <person name="Senba T."/>
            <person name="Matsumura K."/>
            <person name="Nakajima Y."/>
            <person name="Mizuno T."/>
            <person name="Morinaga M."/>
            <person name="Sasaki M."/>
            <person name="Togashi T."/>
            <person name="Oyama M."/>
            <person name="Hata H."/>
            <person name="Watanabe M."/>
            <person name="Komatsu T."/>
            <person name="Mizushima-Sugano J."/>
            <person name="Satoh T."/>
            <person name="Shirai Y."/>
            <person name="Takahashi Y."/>
            <person name="Nakagawa K."/>
            <person name="Okumura K."/>
            <person name="Nagase T."/>
            <person name="Nomura N."/>
            <person name="Kikuchi H."/>
            <person name="Masuho Y."/>
            <person name="Yamashita R."/>
            <person name="Nakai K."/>
            <person name="Yada T."/>
            <person name="Nakamura Y."/>
            <person name="Ohara O."/>
            <person name="Isogai T."/>
            <person name="Sugano S."/>
        </authorList>
    </citation>
    <scope>NUCLEOTIDE SEQUENCE [LARGE SCALE MRNA] (ISOFORM 1)</scope>
    <scope>VARIANTS SER-44; SER-50; ILE-52; HIS-54; VAL-57; ALA-75; GLU-95; SER-96; GLU-100; SER-107; SER-109 AND THR-132</scope>
    <source>
        <tissue>Thalamus</tissue>
    </source>
</reference>
<reference key="5">
    <citation type="journal article" date="2001" name="Nature">
        <title>The DNA sequence and comparative analysis of human chromosome 20.</title>
        <authorList>
            <person name="Deloukas P."/>
            <person name="Matthews L.H."/>
            <person name="Ashurst J.L."/>
            <person name="Burton J."/>
            <person name="Gilbert J.G.R."/>
            <person name="Jones M."/>
            <person name="Stavrides G."/>
            <person name="Almeida J.P."/>
            <person name="Babbage A.K."/>
            <person name="Bagguley C.L."/>
            <person name="Bailey J."/>
            <person name="Barlow K.F."/>
            <person name="Bates K.N."/>
            <person name="Beard L.M."/>
            <person name="Beare D.M."/>
            <person name="Beasley O.P."/>
            <person name="Bird C.P."/>
            <person name="Blakey S.E."/>
            <person name="Bridgeman A.M."/>
            <person name="Brown A.J."/>
            <person name="Buck D."/>
            <person name="Burrill W.D."/>
            <person name="Butler A.P."/>
            <person name="Carder C."/>
            <person name="Carter N.P."/>
            <person name="Chapman J.C."/>
            <person name="Clamp M."/>
            <person name="Clark G."/>
            <person name="Clark L.N."/>
            <person name="Clark S.Y."/>
            <person name="Clee C.M."/>
            <person name="Clegg S."/>
            <person name="Cobley V.E."/>
            <person name="Collier R.E."/>
            <person name="Connor R.E."/>
            <person name="Corby N.R."/>
            <person name="Coulson A."/>
            <person name="Coville G.J."/>
            <person name="Deadman R."/>
            <person name="Dhami P.D."/>
            <person name="Dunn M."/>
            <person name="Ellington A.G."/>
            <person name="Frankland J.A."/>
            <person name="Fraser A."/>
            <person name="French L."/>
            <person name="Garner P."/>
            <person name="Grafham D.V."/>
            <person name="Griffiths C."/>
            <person name="Griffiths M.N.D."/>
            <person name="Gwilliam R."/>
            <person name="Hall R.E."/>
            <person name="Hammond S."/>
            <person name="Harley J.L."/>
            <person name="Heath P.D."/>
            <person name="Ho S."/>
            <person name="Holden J.L."/>
            <person name="Howden P.J."/>
            <person name="Huckle E."/>
            <person name="Hunt A.R."/>
            <person name="Hunt S.E."/>
            <person name="Jekosch K."/>
            <person name="Johnson C.M."/>
            <person name="Johnson D."/>
            <person name="Kay M.P."/>
            <person name="Kimberley A.M."/>
            <person name="King A."/>
            <person name="Knights A."/>
            <person name="Laird G.K."/>
            <person name="Lawlor S."/>
            <person name="Lehvaeslaiho M.H."/>
            <person name="Leversha M.A."/>
            <person name="Lloyd C."/>
            <person name="Lloyd D.M."/>
            <person name="Lovell J.D."/>
            <person name="Marsh V.L."/>
            <person name="Martin S.L."/>
            <person name="McConnachie L.J."/>
            <person name="McLay K."/>
            <person name="McMurray A.A."/>
            <person name="Milne S.A."/>
            <person name="Mistry D."/>
            <person name="Moore M.J.F."/>
            <person name="Mullikin J.C."/>
            <person name="Nickerson T."/>
            <person name="Oliver K."/>
            <person name="Parker A."/>
            <person name="Patel R."/>
            <person name="Pearce T.A.V."/>
            <person name="Peck A.I."/>
            <person name="Phillimore B.J.C.T."/>
            <person name="Prathalingam S.R."/>
            <person name="Plumb R.W."/>
            <person name="Ramsay H."/>
            <person name="Rice C.M."/>
            <person name="Ross M.T."/>
            <person name="Scott C.E."/>
            <person name="Sehra H.K."/>
            <person name="Shownkeen R."/>
            <person name="Sims S."/>
            <person name="Skuce C.D."/>
            <person name="Smith M.L."/>
            <person name="Soderlund C."/>
            <person name="Steward C.A."/>
            <person name="Sulston J.E."/>
            <person name="Swann R.M."/>
            <person name="Sycamore N."/>
            <person name="Taylor R."/>
            <person name="Tee L."/>
            <person name="Thomas D.W."/>
            <person name="Thorpe A."/>
            <person name="Tracey A."/>
            <person name="Tromans A.C."/>
            <person name="Vaudin M."/>
            <person name="Wall M."/>
            <person name="Wallis J.M."/>
            <person name="Whitehead S.L."/>
            <person name="Whittaker P."/>
            <person name="Willey D.L."/>
            <person name="Williams L."/>
            <person name="Williams S.A."/>
            <person name="Wilming L."/>
            <person name="Wray P.W."/>
            <person name="Hubbard T."/>
            <person name="Durbin R.M."/>
            <person name="Bentley D.R."/>
            <person name="Beck S."/>
            <person name="Rogers J."/>
        </authorList>
    </citation>
    <scope>NUCLEOTIDE SEQUENCE [LARGE SCALE GENOMIC DNA]</scope>
</reference>
<reference key="6">
    <citation type="journal article" date="2004" name="Genome Res.">
        <title>The status, quality, and expansion of the NIH full-length cDNA project: the Mammalian Gene Collection (MGC).</title>
        <authorList>
            <consortium name="The MGC Project Team"/>
        </authorList>
    </citation>
    <scope>NUCLEOTIDE SEQUENCE [LARGE SCALE MRNA] (ISOFORMS 1 AND 2)</scope>
    <scope>VARIANTS SER-44; SER-50; ILE-52; HIS-54; VAL-57; ALA-75; GLU-95; SER-96; GLU-100; SER-107; SER-109 AND THR-132</scope>
    <source>
        <tissue>Brain</tissue>
        <tissue>Kidney</tissue>
        <tissue>Skin</tissue>
    </source>
</reference>
<reference key="7">
    <citation type="journal article" date="1998" name="Eur. J. Immunol.">
        <title>Cloning of two members of the SIRP alpha family of protein tyrosine phosphatase binding proteins in cattle that are expressed on monocytes and a subpopulation of dendritic cells and which mediate binding to CD4 T cells.</title>
        <authorList>
            <person name="Brooke G.P."/>
            <person name="Parsons K.R."/>
            <person name="Howard C.J."/>
        </authorList>
    </citation>
    <scope>NUCLEOTIDE SEQUENCE [MRNA] OF 76-504</scope>
    <source>
        <tissue>Monocyte</tissue>
    </source>
</reference>
<reference key="8">
    <citation type="journal article" date="1999" name="Curr. Biol.">
        <title>SHPS-1 is a scaffold for assembling distinct adhesion-regulated multi-protein complexes in macrophages.</title>
        <authorList>
            <person name="Timms J.F."/>
            <person name="Swanson K.D."/>
            <person name="Marie-Cardine A."/>
            <person name="Raab M."/>
            <person name="Rudd C.E."/>
            <person name="Schraven B."/>
            <person name="Neel B.G."/>
        </authorList>
    </citation>
    <scope>FUNCTION</scope>
    <scope>INTERACTION WITH FYB1; SCAP2 AND PTK2B</scope>
</reference>
<reference key="9">
    <citation type="journal article" date="2000" name="J. Biol. Chem.">
        <title>Negative regulation of growth hormone receptor/JAK2 signaling by signal regulatory protein alpha.</title>
        <authorList>
            <person name="Stofega M.R."/>
            <person name="Argetsinger L.S."/>
            <person name="Wang H."/>
            <person name="Ullrich A."/>
            <person name="Carter-Su C."/>
        </authorList>
    </citation>
    <scope>PHOSPHORYLATION BY JAK2</scope>
    <scope>INTERACTION WITH PTPN11 AND JAK2</scope>
</reference>
<reference key="10">
    <citation type="journal article" date="2001" name="J. Immunol.">
        <title>Bidirectional negative regulation of human T and dendritic cells by CD47 and its cognate receptor signal-regulator protein-alpha: down-regulation of IL-12 responsiveness and inhibition of dendritic cell activation.</title>
        <authorList>
            <person name="Latour S."/>
            <person name="Tanaka H."/>
            <person name="Demeure C."/>
            <person name="Mateo V."/>
            <person name="Rubio M."/>
            <person name="Brown E.J."/>
            <person name="Maliszewski C."/>
            <person name="Lindberg F.P."/>
            <person name="Oldenborg A."/>
            <person name="Ullrich A."/>
            <person name="Delespesse G."/>
            <person name="Sarfati M."/>
        </authorList>
    </citation>
    <scope>FUNCTION</scope>
    <scope>INTERACTION WITH CD47</scope>
</reference>
<reference key="11">
    <citation type="journal article" date="2005" name="J. Proteome Res.">
        <title>Human plasma N-glycoproteome analysis by immunoaffinity subtraction, hydrazide chemistry, and mass spectrometry.</title>
        <authorList>
            <person name="Liu T."/>
            <person name="Qian W.-J."/>
            <person name="Gritsenko M.A."/>
            <person name="Camp D.G. II"/>
            <person name="Monroe M.E."/>
            <person name="Moore R.J."/>
            <person name="Smith R.D."/>
        </authorList>
    </citation>
    <scope>GLYCOSYLATION [LARGE SCALE ANALYSIS] AT ASN-245</scope>
    <source>
        <tissue>Plasma</tissue>
    </source>
</reference>
<reference key="12">
    <citation type="journal article" date="2009" name="J. Proteome Res.">
        <title>Glycoproteomics analysis of human liver tissue by combination of multiple enzyme digestion and hydrazide chemistry.</title>
        <authorList>
            <person name="Chen R."/>
            <person name="Jiang X."/>
            <person name="Sun D."/>
            <person name="Han G."/>
            <person name="Wang F."/>
            <person name="Ye M."/>
            <person name="Wang L."/>
            <person name="Zou H."/>
        </authorList>
    </citation>
    <scope>GLYCOSYLATION [LARGE SCALE ANALYSIS] AT ASN-270 AND ASN-292</scope>
    <source>
        <tissue>Liver</tissue>
    </source>
</reference>
<reference key="13">
    <citation type="journal article" date="2014" name="J. Proteomics">
        <title>An enzyme assisted RP-RPLC approach for in-depth analysis of human liver phosphoproteome.</title>
        <authorList>
            <person name="Bian Y."/>
            <person name="Song C."/>
            <person name="Cheng K."/>
            <person name="Dong M."/>
            <person name="Wang F."/>
            <person name="Huang J."/>
            <person name="Sun D."/>
            <person name="Wang L."/>
            <person name="Ye M."/>
            <person name="Zou H."/>
        </authorList>
    </citation>
    <scope>PHOSPHORYLATION [LARGE SCALE ANALYSIS] AT TYR-496</scope>
    <scope>IDENTIFICATION BY MASS SPECTROMETRY [LARGE SCALE ANALYSIS]</scope>
    <source>
        <tissue>Liver</tissue>
    </source>
</reference>
<reference key="14">
    <citation type="journal article" date="2014" name="J. Am. Soc. Nephrol.">
        <title>Thrombospondin-1 activation of signal-regulatory protein-alpha stimulates reactive oxygen species production and promotes renal ischemia reperfusion injury.</title>
        <authorList>
            <person name="Yao M."/>
            <person name="Rogers N.M."/>
            <person name="Csanyi G."/>
            <person name="Rodriguez A.I."/>
            <person name="Ross M.A."/>
            <person name="St Croix C."/>
            <person name="Knupp H."/>
            <person name="Novelli E.M."/>
            <person name="Thomson A.W."/>
            <person name="Pagano P.J."/>
            <person name="Isenberg J.S."/>
        </authorList>
    </citation>
    <scope>FUNCTION</scope>
    <scope>INTERACTION WITH THBS1</scope>
</reference>
<reference key="15">
    <citation type="journal article" date="2015" name="Proteomics">
        <title>N-terminome analysis of the human mitochondrial proteome.</title>
        <authorList>
            <person name="Vaca Jacome A.S."/>
            <person name="Rabilloud T."/>
            <person name="Schaeffer-Reiss C."/>
            <person name="Rompais M."/>
            <person name="Ayoub D."/>
            <person name="Lane L."/>
            <person name="Bairoch A."/>
            <person name="Van Dorsselaer A."/>
            <person name="Carapito C."/>
        </authorList>
    </citation>
    <scope>IDENTIFICATION BY MASS SPECTROMETRY [LARGE SCALE ANALYSIS]</scope>
</reference>
<reference key="16">
    <citation type="journal article" date="2007" name="J. Biol. Chem.">
        <title>The structure of the macrophage signal regulatory protein alpha (SIRPalpha) inhibitory receptor reveals a binding face reminiscent of that used by T cell receptors.</title>
        <authorList>
            <person name="Hatherley D."/>
            <person name="Harlos K."/>
            <person name="Dunlop D.C."/>
            <person name="Stuart D.I."/>
            <person name="Barclay A.N."/>
        </authorList>
    </citation>
    <scope>X-RAY CRYSTALLOGRAPHY (1.8 ANGSTROMS) OF 31-149</scope>
    <scope>DISULFIDE BOND</scope>
</reference>
<reference key="17">
    <citation type="journal article" date="2008" name="Mol. Cell">
        <title>Paired receptor specificity explained by structures of signal regulatory proteins alone and complexed with CD47.</title>
        <authorList>
            <person name="Hatherley D."/>
            <person name="Graham S.C."/>
            <person name="Turner J."/>
            <person name="Harlos K."/>
            <person name="Stuart D.I."/>
            <person name="Barclay A.N."/>
        </authorList>
    </citation>
    <scope>X-RAY CRYSTALLOGRAPHY (1.85 ANGSTROMS) OF 31-149 IN COMPLEX WITH CD47</scope>
    <scope>DISULFIDE BOND</scope>
</reference>